<proteinExistence type="inferred from homology"/>
<accession>Q1CSB1</accession>
<keyword id="KW-0131">Cell cycle</keyword>
<keyword id="KW-0132">Cell division</keyword>
<keyword id="KW-0997">Cell inner membrane</keyword>
<keyword id="KW-1003">Cell membrane</keyword>
<keyword id="KW-0133">Cell shape</keyword>
<keyword id="KW-0961">Cell wall biogenesis/degradation</keyword>
<keyword id="KW-0328">Glycosyltransferase</keyword>
<keyword id="KW-0472">Membrane</keyword>
<keyword id="KW-0573">Peptidoglycan synthesis</keyword>
<keyword id="KW-0808">Transferase</keyword>
<comment type="function">
    <text evidence="1">Cell wall formation. Catalyzes the transfer of a GlcNAc subunit on undecaprenyl-pyrophosphoryl-MurNAc-pentapeptide (lipid intermediate I) to form undecaprenyl-pyrophosphoryl-MurNAc-(pentapeptide)GlcNAc (lipid intermediate II).</text>
</comment>
<comment type="catalytic activity">
    <reaction evidence="1">
        <text>di-trans,octa-cis-undecaprenyl diphospho-N-acetyl-alpha-D-muramoyl-L-alanyl-D-glutamyl-meso-2,6-diaminopimeloyl-D-alanyl-D-alanine + UDP-N-acetyl-alpha-D-glucosamine = di-trans,octa-cis-undecaprenyl diphospho-[N-acetyl-alpha-D-glucosaminyl-(1-&gt;4)]-N-acetyl-alpha-D-muramoyl-L-alanyl-D-glutamyl-meso-2,6-diaminopimeloyl-D-alanyl-D-alanine + UDP + H(+)</text>
        <dbReference type="Rhea" id="RHEA:31227"/>
        <dbReference type="ChEBI" id="CHEBI:15378"/>
        <dbReference type="ChEBI" id="CHEBI:57705"/>
        <dbReference type="ChEBI" id="CHEBI:58223"/>
        <dbReference type="ChEBI" id="CHEBI:61387"/>
        <dbReference type="ChEBI" id="CHEBI:61388"/>
        <dbReference type="EC" id="2.4.1.227"/>
    </reaction>
</comment>
<comment type="pathway">
    <text evidence="1">Cell wall biogenesis; peptidoglycan biosynthesis.</text>
</comment>
<comment type="subcellular location">
    <subcellularLocation>
        <location evidence="1">Cell inner membrane</location>
        <topology evidence="1">Peripheral membrane protein</topology>
        <orientation evidence="1">Cytoplasmic side</orientation>
    </subcellularLocation>
</comment>
<comment type="similarity">
    <text evidence="1">Belongs to the glycosyltransferase 28 family. MurG subfamily.</text>
</comment>
<dbReference type="EC" id="2.4.1.227" evidence="1"/>
<dbReference type="EMBL" id="CP000241">
    <property type="protein sequence ID" value="ABF85161.1"/>
    <property type="molecule type" value="Genomic_DNA"/>
</dbReference>
<dbReference type="RefSeq" id="WP_000666564.1">
    <property type="nucleotide sequence ID" value="NC_008086.1"/>
</dbReference>
<dbReference type="SMR" id="Q1CSB1"/>
<dbReference type="CAZy" id="GT28">
    <property type="family name" value="Glycosyltransferase Family 28"/>
</dbReference>
<dbReference type="KEGG" id="hpa:HPAG1_1094"/>
<dbReference type="HOGENOM" id="CLU_037404_2_1_7"/>
<dbReference type="UniPathway" id="UPA00219"/>
<dbReference type="GO" id="GO:0005886">
    <property type="term" value="C:plasma membrane"/>
    <property type="evidence" value="ECO:0007669"/>
    <property type="project" value="UniProtKB-SubCell"/>
</dbReference>
<dbReference type="GO" id="GO:0051991">
    <property type="term" value="F:UDP-N-acetyl-D-glucosamine:N-acetylmuramoyl-L-alanyl-D-glutamyl-meso-2,6-diaminopimelyl-D-alanyl-D-alanine-diphosphoundecaprenol 4-beta-N-acetylglucosaminlytransferase activity"/>
    <property type="evidence" value="ECO:0007669"/>
    <property type="project" value="RHEA"/>
</dbReference>
<dbReference type="GO" id="GO:0050511">
    <property type="term" value="F:undecaprenyldiphospho-muramoylpentapeptide beta-N-acetylglucosaminyltransferase activity"/>
    <property type="evidence" value="ECO:0007669"/>
    <property type="project" value="UniProtKB-UniRule"/>
</dbReference>
<dbReference type="GO" id="GO:0005975">
    <property type="term" value="P:carbohydrate metabolic process"/>
    <property type="evidence" value="ECO:0007669"/>
    <property type="project" value="InterPro"/>
</dbReference>
<dbReference type="GO" id="GO:0051301">
    <property type="term" value="P:cell division"/>
    <property type="evidence" value="ECO:0007669"/>
    <property type="project" value="UniProtKB-KW"/>
</dbReference>
<dbReference type="GO" id="GO:0071555">
    <property type="term" value="P:cell wall organization"/>
    <property type="evidence" value="ECO:0007669"/>
    <property type="project" value="UniProtKB-KW"/>
</dbReference>
<dbReference type="GO" id="GO:0030259">
    <property type="term" value="P:lipid glycosylation"/>
    <property type="evidence" value="ECO:0007669"/>
    <property type="project" value="UniProtKB-UniRule"/>
</dbReference>
<dbReference type="GO" id="GO:0009252">
    <property type="term" value="P:peptidoglycan biosynthetic process"/>
    <property type="evidence" value="ECO:0007669"/>
    <property type="project" value="UniProtKB-UniRule"/>
</dbReference>
<dbReference type="GO" id="GO:0008360">
    <property type="term" value="P:regulation of cell shape"/>
    <property type="evidence" value="ECO:0007669"/>
    <property type="project" value="UniProtKB-KW"/>
</dbReference>
<dbReference type="CDD" id="cd03785">
    <property type="entry name" value="GT28_MurG"/>
    <property type="match status" value="1"/>
</dbReference>
<dbReference type="Gene3D" id="3.40.50.2000">
    <property type="entry name" value="Glycogen Phosphorylase B"/>
    <property type="match status" value="2"/>
</dbReference>
<dbReference type="HAMAP" id="MF_00033">
    <property type="entry name" value="MurG"/>
    <property type="match status" value="1"/>
</dbReference>
<dbReference type="InterPro" id="IPR006009">
    <property type="entry name" value="GlcNAc_MurG"/>
</dbReference>
<dbReference type="InterPro" id="IPR007235">
    <property type="entry name" value="Glyco_trans_28_C"/>
</dbReference>
<dbReference type="InterPro" id="IPR004276">
    <property type="entry name" value="GlycoTrans_28_N"/>
</dbReference>
<dbReference type="NCBIfam" id="TIGR01133">
    <property type="entry name" value="murG"/>
    <property type="match status" value="1"/>
</dbReference>
<dbReference type="PANTHER" id="PTHR21015:SF22">
    <property type="entry name" value="GLYCOSYLTRANSFERASE"/>
    <property type="match status" value="1"/>
</dbReference>
<dbReference type="PANTHER" id="PTHR21015">
    <property type="entry name" value="UDP-N-ACETYLGLUCOSAMINE--N-ACETYLMURAMYL-(PENTAPEPTIDE) PYROPHOSPHORYL-UNDECAPRENOL N-ACETYLGLUCOSAMINE TRANSFERASE 1"/>
    <property type="match status" value="1"/>
</dbReference>
<dbReference type="Pfam" id="PF04101">
    <property type="entry name" value="Glyco_tran_28_C"/>
    <property type="match status" value="1"/>
</dbReference>
<dbReference type="Pfam" id="PF03033">
    <property type="entry name" value="Glyco_transf_28"/>
    <property type="match status" value="1"/>
</dbReference>
<dbReference type="SUPFAM" id="SSF53756">
    <property type="entry name" value="UDP-Glycosyltransferase/glycogen phosphorylase"/>
    <property type="match status" value="1"/>
</dbReference>
<feature type="chain" id="PRO_1000002656" description="UDP-N-acetylglucosamine--N-acetylmuramyl-(pentapeptide) pyrophosphoryl-undecaprenol N-acetylglucosamine transferase">
    <location>
        <begin position="1"/>
        <end position="353"/>
    </location>
</feature>
<feature type="binding site" evidence="1">
    <location>
        <begin position="10"/>
        <end position="12"/>
    </location>
    <ligand>
        <name>UDP-N-acetyl-alpha-D-glucosamine</name>
        <dbReference type="ChEBI" id="CHEBI:57705"/>
    </ligand>
</feature>
<feature type="binding site" evidence="1">
    <location>
        <position position="124"/>
    </location>
    <ligand>
        <name>UDP-N-acetyl-alpha-D-glucosamine</name>
        <dbReference type="ChEBI" id="CHEBI:57705"/>
    </ligand>
</feature>
<feature type="binding site" evidence="1">
    <location>
        <position position="183"/>
    </location>
    <ligand>
        <name>UDP-N-acetyl-alpha-D-glucosamine</name>
        <dbReference type="ChEBI" id="CHEBI:57705"/>
    </ligand>
</feature>
<feature type="binding site" evidence="1">
    <location>
        <position position="283"/>
    </location>
    <ligand>
        <name>UDP-N-acetyl-alpha-D-glucosamine</name>
        <dbReference type="ChEBI" id="CHEBI:57705"/>
    </ligand>
</feature>
<reference key="1">
    <citation type="journal article" date="2006" name="Proc. Natl. Acad. Sci. U.S.A.">
        <title>The complete genome sequence of a chronic atrophic gastritis Helicobacter pylori strain: evolution during disease progression.</title>
        <authorList>
            <person name="Oh J.D."/>
            <person name="Kling-Baeckhed H."/>
            <person name="Giannakis M."/>
            <person name="Xu J."/>
            <person name="Fulton R.S."/>
            <person name="Fulton L.A."/>
            <person name="Cordum H.S."/>
            <person name="Wang C."/>
            <person name="Elliott G."/>
            <person name="Edwards J."/>
            <person name="Mardis E.R."/>
            <person name="Engstrand L.G."/>
            <person name="Gordon J.I."/>
        </authorList>
    </citation>
    <scope>NUCLEOTIDE SEQUENCE [LARGE SCALE GENOMIC DNA]</scope>
    <source>
        <strain>HPAG1</strain>
    </source>
</reference>
<sequence>MKFALTGGGTGGHLSIAKALAIELEKQGIEAIYLGSTYGQDKEWFENSPLFSERYFFNTQGVVNKSFFKKIGSLFLQAKAAFKAKEILKKHQITHTISVGGFSAGPASFASLLNKIPLYIHEQNAIKGSLNRYLSPKAKAVFSSYAFKDKGHHVLTSYPVQNAFFDFARTRTEIKHILFLGGSQGAKAINEFALLNAPKLTKQGIKITHICGPNSYEQVRFFYQELGLLDKIELFAFHNNITEVMHRADLCVSRAGASSVWELCANGLPTIFIPYPFASNNHQYYNVLEFEKENLCYVAPQNELLPKKLFEVIRKLNQKDDQGNKNLTAISNQLQQKIAKDGAKTIIETILSA</sequence>
<evidence type="ECO:0000255" key="1">
    <source>
        <dbReference type="HAMAP-Rule" id="MF_00033"/>
    </source>
</evidence>
<organism>
    <name type="scientific">Helicobacter pylori (strain HPAG1)</name>
    <dbReference type="NCBI Taxonomy" id="357544"/>
    <lineage>
        <taxon>Bacteria</taxon>
        <taxon>Pseudomonadati</taxon>
        <taxon>Campylobacterota</taxon>
        <taxon>Epsilonproteobacteria</taxon>
        <taxon>Campylobacterales</taxon>
        <taxon>Helicobacteraceae</taxon>
        <taxon>Helicobacter</taxon>
    </lineage>
</organism>
<protein>
    <recommendedName>
        <fullName evidence="1">UDP-N-acetylglucosamine--N-acetylmuramyl-(pentapeptide) pyrophosphoryl-undecaprenol N-acetylglucosamine transferase</fullName>
        <ecNumber evidence="1">2.4.1.227</ecNumber>
    </recommendedName>
    <alternativeName>
        <fullName evidence="1">Undecaprenyl-PP-MurNAc-pentapeptide-UDPGlcNAc GlcNAc transferase</fullName>
    </alternativeName>
</protein>
<name>MURG_HELPH</name>
<gene>
    <name evidence="1" type="primary">murG</name>
    <name type="ordered locus">HPAG1_1094</name>
</gene>